<evidence type="ECO:0000255" key="1">
    <source>
        <dbReference type="HAMAP-Rule" id="MF_00141"/>
    </source>
</evidence>
<keyword id="KW-0963">Cytoplasm</keyword>
<keyword id="KW-0251">Elongation factor</keyword>
<keyword id="KW-0648">Protein biosynthesis</keyword>
<feature type="chain" id="PRO_1000123014" description="Elongation factor P">
    <location>
        <begin position="1"/>
        <end position="185"/>
    </location>
</feature>
<proteinExistence type="inferred from homology"/>
<organism>
    <name type="scientific">Listeria monocytogenes serotype 4a (strain HCC23)</name>
    <dbReference type="NCBI Taxonomy" id="552536"/>
    <lineage>
        <taxon>Bacteria</taxon>
        <taxon>Bacillati</taxon>
        <taxon>Bacillota</taxon>
        <taxon>Bacilli</taxon>
        <taxon>Bacillales</taxon>
        <taxon>Listeriaceae</taxon>
        <taxon>Listeria</taxon>
    </lineage>
</organism>
<comment type="function">
    <text evidence="1">Involved in peptide bond synthesis. Stimulates efficient translation and peptide-bond synthesis on native or reconstituted 70S ribosomes in vitro. Probably functions indirectly by altering the affinity of the ribosome for aminoacyl-tRNA, thus increasing their reactivity as acceptors for peptidyl transferase.</text>
</comment>
<comment type="pathway">
    <text evidence="1">Protein biosynthesis; polypeptide chain elongation.</text>
</comment>
<comment type="subcellular location">
    <subcellularLocation>
        <location evidence="1">Cytoplasm</location>
    </subcellularLocation>
</comment>
<comment type="similarity">
    <text evidence="1">Belongs to the elongation factor P family.</text>
</comment>
<name>EFP_LISMH</name>
<accession>B8DFX3</accession>
<gene>
    <name evidence="1" type="primary">efp</name>
    <name type="ordered locus">LMHCC_1216</name>
</gene>
<protein>
    <recommendedName>
        <fullName evidence="1">Elongation factor P</fullName>
        <shortName evidence="1">EF-P</shortName>
    </recommendedName>
</protein>
<dbReference type="EMBL" id="CP001175">
    <property type="protein sequence ID" value="ACK39563.1"/>
    <property type="molecule type" value="Genomic_DNA"/>
</dbReference>
<dbReference type="RefSeq" id="WP_003722482.1">
    <property type="nucleotide sequence ID" value="NC_011660.1"/>
</dbReference>
<dbReference type="SMR" id="B8DFX3"/>
<dbReference type="GeneID" id="93234772"/>
<dbReference type="KEGG" id="lmh:LMHCC_1216"/>
<dbReference type="HOGENOM" id="CLU_074944_0_1_9"/>
<dbReference type="UniPathway" id="UPA00345"/>
<dbReference type="GO" id="GO:0005737">
    <property type="term" value="C:cytoplasm"/>
    <property type="evidence" value="ECO:0007669"/>
    <property type="project" value="UniProtKB-SubCell"/>
</dbReference>
<dbReference type="GO" id="GO:0003746">
    <property type="term" value="F:translation elongation factor activity"/>
    <property type="evidence" value="ECO:0007669"/>
    <property type="project" value="UniProtKB-UniRule"/>
</dbReference>
<dbReference type="GO" id="GO:0043043">
    <property type="term" value="P:peptide biosynthetic process"/>
    <property type="evidence" value="ECO:0007669"/>
    <property type="project" value="InterPro"/>
</dbReference>
<dbReference type="CDD" id="cd04470">
    <property type="entry name" value="S1_EF-P_repeat_1"/>
    <property type="match status" value="1"/>
</dbReference>
<dbReference type="CDD" id="cd05794">
    <property type="entry name" value="S1_EF-P_repeat_2"/>
    <property type="match status" value="1"/>
</dbReference>
<dbReference type="FunFam" id="2.30.30.30:FF:000010">
    <property type="entry name" value="Elongation factor P"/>
    <property type="match status" value="1"/>
</dbReference>
<dbReference type="FunFam" id="2.40.50.140:FF:000004">
    <property type="entry name" value="Elongation factor P"/>
    <property type="match status" value="1"/>
</dbReference>
<dbReference type="FunFam" id="2.40.50.140:FF:000009">
    <property type="entry name" value="Elongation factor P"/>
    <property type="match status" value="1"/>
</dbReference>
<dbReference type="Gene3D" id="2.30.30.30">
    <property type="match status" value="1"/>
</dbReference>
<dbReference type="Gene3D" id="2.40.50.140">
    <property type="entry name" value="Nucleic acid-binding proteins"/>
    <property type="match status" value="2"/>
</dbReference>
<dbReference type="HAMAP" id="MF_00141">
    <property type="entry name" value="EF_P"/>
    <property type="match status" value="1"/>
</dbReference>
<dbReference type="InterPro" id="IPR015365">
    <property type="entry name" value="Elong-fact-P_C"/>
</dbReference>
<dbReference type="InterPro" id="IPR012340">
    <property type="entry name" value="NA-bd_OB-fold"/>
</dbReference>
<dbReference type="InterPro" id="IPR014722">
    <property type="entry name" value="Rib_uL2_dom2"/>
</dbReference>
<dbReference type="InterPro" id="IPR020599">
    <property type="entry name" value="Transl_elong_fac_P/YeiP"/>
</dbReference>
<dbReference type="InterPro" id="IPR013185">
    <property type="entry name" value="Transl_elong_KOW-like"/>
</dbReference>
<dbReference type="InterPro" id="IPR001059">
    <property type="entry name" value="Transl_elong_P/YeiP_cen"/>
</dbReference>
<dbReference type="InterPro" id="IPR013852">
    <property type="entry name" value="Transl_elong_P/YeiP_CS"/>
</dbReference>
<dbReference type="InterPro" id="IPR011768">
    <property type="entry name" value="Transl_elongation_fac_P"/>
</dbReference>
<dbReference type="InterPro" id="IPR008991">
    <property type="entry name" value="Translation_prot_SH3-like_sf"/>
</dbReference>
<dbReference type="NCBIfam" id="TIGR00038">
    <property type="entry name" value="efp"/>
    <property type="match status" value="1"/>
</dbReference>
<dbReference type="NCBIfam" id="NF001810">
    <property type="entry name" value="PRK00529.1"/>
    <property type="match status" value="1"/>
</dbReference>
<dbReference type="PANTHER" id="PTHR30053">
    <property type="entry name" value="ELONGATION FACTOR P"/>
    <property type="match status" value="1"/>
</dbReference>
<dbReference type="PANTHER" id="PTHR30053:SF12">
    <property type="entry name" value="ELONGATION FACTOR P (EF-P) FAMILY PROTEIN"/>
    <property type="match status" value="1"/>
</dbReference>
<dbReference type="Pfam" id="PF01132">
    <property type="entry name" value="EFP"/>
    <property type="match status" value="1"/>
</dbReference>
<dbReference type="Pfam" id="PF08207">
    <property type="entry name" value="EFP_N"/>
    <property type="match status" value="1"/>
</dbReference>
<dbReference type="Pfam" id="PF09285">
    <property type="entry name" value="Elong-fact-P_C"/>
    <property type="match status" value="1"/>
</dbReference>
<dbReference type="PIRSF" id="PIRSF005901">
    <property type="entry name" value="EF-P"/>
    <property type="match status" value="1"/>
</dbReference>
<dbReference type="SMART" id="SM01185">
    <property type="entry name" value="EFP"/>
    <property type="match status" value="1"/>
</dbReference>
<dbReference type="SMART" id="SM00841">
    <property type="entry name" value="Elong-fact-P_C"/>
    <property type="match status" value="1"/>
</dbReference>
<dbReference type="SUPFAM" id="SSF50249">
    <property type="entry name" value="Nucleic acid-binding proteins"/>
    <property type="match status" value="2"/>
</dbReference>
<dbReference type="SUPFAM" id="SSF50104">
    <property type="entry name" value="Translation proteins SH3-like domain"/>
    <property type="match status" value="1"/>
</dbReference>
<dbReference type="PROSITE" id="PS01275">
    <property type="entry name" value="EFP"/>
    <property type="match status" value="1"/>
</dbReference>
<reference key="1">
    <citation type="journal article" date="2011" name="J. Bacteriol.">
        <title>Genome sequence of lineage III Listeria monocytogenes strain HCC23.</title>
        <authorList>
            <person name="Steele C.L."/>
            <person name="Donaldson J.R."/>
            <person name="Paul D."/>
            <person name="Banes M.M."/>
            <person name="Arick T."/>
            <person name="Bridges S.M."/>
            <person name="Lawrence M.L."/>
        </authorList>
    </citation>
    <scope>NUCLEOTIDE SEQUENCE [LARGE SCALE GENOMIC DNA]</scope>
    <source>
        <strain>HCC23</strain>
    </source>
</reference>
<sequence>MISVNDFKTGLTIEVDNGIWRVLDFQHVKPGKGAAFVRSKLRNLRTGAIQEKTFRGGEKVAKAQIDNRKMAYLYADGTNHVFMDNESYEQIELPEDQIAHELKFLKENMEINIIMYQGETIGIDLPNTVELVVTATDPGIKGDTSSGGSKPATLETGLVVQVPFFVNEGDKLVINTTEAAYVSRA</sequence>